<reference evidence="6" key="1">
    <citation type="journal article" date="2007" name="Nature">
        <title>Evolution of genes and genomes on the Drosophila phylogeny.</title>
        <authorList>
            <consortium name="Drosophila 12 genomes consortium"/>
        </authorList>
    </citation>
    <scope>NUCLEOTIDE SEQUENCE [LARGE SCALE GENOMIC DNA]</scope>
    <source>
        <strain evidence="6">Tucson 14024-0371.13</strain>
    </source>
</reference>
<protein>
    <recommendedName>
        <fullName evidence="2">3'-5' exonuclease</fullName>
        <ecNumber>3.1.11.-</ecNumber>
    </recommendedName>
    <alternativeName>
        <fullName>Werner Syndrome-like exonuclease</fullName>
    </alternativeName>
</protein>
<name>WRNXO_DROAN</name>
<accession>B3LWP6</accession>
<sequence>MDKYLIKLPNKNINDMVSDKKEVVKKETPKMTGRQAKKDTPKQEKEKENTQEDNTPKQNKAGRTGRSSIKRKNLDTPEVTQEKESVESENPPKRRSTRTTRSTRSMADGGTPSPEKEKPEKLPFIKYKGAIKYYTESQDIAASADDVMQWVEKQKEDVVPMAFDMEWPFSFQTGPGKSSVIQICVDEKCCYIYQLTNLKKLPSALVALINHPKVRLHGVNIKADFRKLQRDFPEVSADALIEKCVDLGVWCNVICQTGGRWSLERLANFICRKAMDKSKKVRMSKWHVIPLDENQLMYAAIDVYIGQVIYRDLEQREKTKLANEEKFKEENGETAFKAVKALGEKFLSKMNEVTL</sequence>
<evidence type="ECO:0000250" key="1">
    <source>
        <dbReference type="UniProtKB" id="Q14191"/>
    </source>
</evidence>
<evidence type="ECO:0000250" key="2">
    <source>
        <dbReference type="UniProtKB" id="Q9VE86"/>
    </source>
</evidence>
<evidence type="ECO:0000255" key="3"/>
<evidence type="ECO:0000256" key="4">
    <source>
        <dbReference type="SAM" id="MobiDB-lite"/>
    </source>
</evidence>
<evidence type="ECO:0000305" key="5"/>
<evidence type="ECO:0000312" key="6">
    <source>
        <dbReference type="EMBL" id="EDV42684.1"/>
    </source>
</evidence>
<feature type="chain" id="PRO_0000399373" description="3'-5' exonuclease">
    <location>
        <begin position="1"/>
        <end position="355"/>
    </location>
</feature>
<feature type="domain" description="3'-5' exonuclease" evidence="3">
    <location>
        <begin position="147"/>
        <end position="315"/>
    </location>
</feature>
<feature type="region of interest" description="Disordered" evidence="4">
    <location>
        <begin position="1"/>
        <end position="121"/>
    </location>
</feature>
<feature type="compositionally biased region" description="Basic and acidic residues" evidence="4">
    <location>
        <begin position="17"/>
        <end position="29"/>
    </location>
</feature>
<feature type="compositionally biased region" description="Basic and acidic residues" evidence="4">
    <location>
        <begin position="36"/>
        <end position="50"/>
    </location>
</feature>
<feature type="compositionally biased region" description="Basic and acidic residues" evidence="4">
    <location>
        <begin position="72"/>
        <end position="92"/>
    </location>
</feature>
<feature type="binding site" evidence="2">
    <location>
        <position position="164"/>
    </location>
    <ligand>
        <name>Mg(2+)</name>
        <dbReference type="ChEBI" id="CHEBI:18420"/>
        <label>1</label>
        <note>catalytic</note>
    </ligand>
</feature>
<feature type="binding site" evidence="2">
    <location>
        <position position="164"/>
    </location>
    <ligand>
        <name>Mg(2+)</name>
        <dbReference type="ChEBI" id="CHEBI:18420"/>
        <label>2</label>
        <note>catalytic</note>
    </ligand>
</feature>
<feature type="binding site" evidence="2">
    <location>
        <position position="166"/>
    </location>
    <ligand>
        <name>Mg(2+)</name>
        <dbReference type="ChEBI" id="CHEBI:18420"/>
        <label>1</label>
        <note>catalytic</note>
    </ligand>
</feature>
<feature type="binding site" evidence="1">
    <location>
        <position position="302"/>
    </location>
    <ligand>
        <name>Mg(2+)</name>
        <dbReference type="ChEBI" id="CHEBI:18420"/>
        <label>1</label>
        <note>catalytic</note>
    </ligand>
</feature>
<feature type="modified residue" description="Phosphoserine" evidence="2">
    <location>
        <position position="105"/>
    </location>
</feature>
<feature type="modified residue" description="Phosphoserine" evidence="2">
    <location>
        <position position="113"/>
    </location>
</feature>
<organism>
    <name type="scientific">Drosophila ananassae</name>
    <name type="common">Fruit fly</name>
    <dbReference type="NCBI Taxonomy" id="7217"/>
    <lineage>
        <taxon>Eukaryota</taxon>
        <taxon>Metazoa</taxon>
        <taxon>Ecdysozoa</taxon>
        <taxon>Arthropoda</taxon>
        <taxon>Hexapoda</taxon>
        <taxon>Insecta</taxon>
        <taxon>Pterygota</taxon>
        <taxon>Neoptera</taxon>
        <taxon>Endopterygota</taxon>
        <taxon>Diptera</taxon>
        <taxon>Brachycera</taxon>
        <taxon>Muscomorpha</taxon>
        <taxon>Ephydroidea</taxon>
        <taxon>Drosophilidae</taxon>
        <taxon>Drosophila</taxon>
        <taxon>Sophophora</taxon>
    </lineage>
</organism>
<dbReference type="EC" id="3.1.11.-"/>
<dbReference type="EMBL" id="CH902617">
    <property type="protein sequence ID" value="EDV42684.1"/>
    <property type="status" value="ALT_INIT"/>
    <property type="molecule type" value="Genomic_DNA"/>
</dbReference>
<dbReference type="SMR" id="B3LWP6"/>
<dbReference type="FunCoup" id="B3LWP6">
    <property type="interactions" value="372"/>
</dbReference>
<dbReference type="STRING" id="7217.B3LWP6"/>
<dbReference type="EnsemblMetazoa" id="FBtr0122818">
    <property type="protein sequence ID" value="FBpp0121310"/>
    <property type="gene ID" value="FBgn0095136"/>
</dbReference>
<dbReference type="EnsemblMetazoa" id="XM_001954087.4">
    <property type="protein sequence ID" value="XP_001954123.2"/>
    <property type="gene ID" value="LOC6500896"/>
</dbReference>
<dbReference type="GeneID" id="6500896"/>
<dbReference type="KEGG" id="dan:6500896"/>
<dbReference type="eggNOG" id="KOG4373">
    <property type="taxonomic scope" value="Eukaryota"/>
</dbReference>
<dbReference type="InParanoid" id="B3LWP6"/>
<dbReference type="OrthoDB" id="10261556at2759"/>
<dbReference type="ChiTaRS" id="WRNexo">
    <property type="organism name" value="fly"/>
</dbReference>
<dbReference type="Proteomes" id="UP000007801">
    <property type="component" value="Unassembled WGS sequence"/>
</dbReference>
<dbReference type="GO" id="GO:0005634">
    <property type="term" value="C:nucleus"/>
    <property type="evidence" value="ECO:0000250"/>
    <property type="project" value="UniProtKB"/>
</dbReference>
<dbReference type="GO" id="GO:0008408">
    <property type="term" value="F:3'-5' exonuclease activity"/>
    <property type="evidence" value="ECO:0000250"/>
    <property type="project" value="UniProtKB"/>
</dbReference>
<dbReference type="GO" id="GO:0046872">
    <property type="term" value="F:metal ion binding"/>
    <property type="evidence" value="ECO:0007669"/>
    <property type="project" value="UniProtKB-KW"/>
</dbReference>
<dbReference type="GO" id="GO:0003676">
    <property type="term" value="F:nucleic acid binding"/>
    <property type="evidence" value="ECO:0007669"/>
    <property type="project" value="InterPro"/>
</dbReference>
<dbReference type="GO" id="GO:0045950">
    <property type="term" value="P:negative regulation of mitotic recombination"/>
    <property type="evidence" value="ECO:0000250"/>
    <property type="project" value="UniProtKB"/>
</dbReference>
<dbReference type="GO" id="GO:0006139">
    <property type="term" value="P:nucleobase-containing compound metabolic process"/>
    <property type="evidence" value="ECO:0007669"/>
    <property type="project" value="InterPro"/>
</dbReference>
<dbReference type="CDD" id="cd06141">
    <property type="entry name" value="WRN_exo"/>
    <property type="match status" value="1"/>
</dbReference>
<dbReference type="FunFam" id="3.30.420.10:FF:000104">
    <property type="entry name" value="Werner Syndrome-like exonuclease"/>
    <property type="match status" value="1"/>
</dbReference>
<dbReference type="Gene3D" id="3.30.420.10">
    <property type="entry name" value="Ribonuclease H-like superfamily/Ribonuclease H"/>
    <property type="match status" value="1"/>
</dbReference>
<dbReference type="InterPro" id="IPR002562">
    <property type="entry name" value="3'-5'_exonuclease_dom"/>
</dbReference>
<dbReference type="InterPro" id="IPR051132">
    <property type="entry name" value="3-5_Exonuclease_domain"/>
</dbReference>
<dbReference type="InterPro" id="IPR012337">
    <property type="entry name" value="RNaseH-like_sf"/>
</dbReference>
<dbReference type="InterPro" id="IPR036397">
    <property type="entry name" value="RNaseH_sf"/>
</dbReference>
<dbReference type="PANTHER" id="PTHR13620:SF109">
    <property type="entry name" value="3'-5' EXONUCLEASE"/>
    <property type="match status" value="1"/>
</dbReference>
<dbReference type="PANTHER" id="PTHR13620">
    <property type="entry name" value="3-5 EXONUCLEASE"/>
    <property type="match status" value="1"/>
</dbReference>
<dbReference type="Pfam" id="PF01612">
    <property type="entry name" value="DNA_pol_A_exo1"/>
    <property type="match status" value="1"/>
</dbReference>
<dbReference type="SMART" id="SM00474">
    <property type="entry name" value="35EXOc"/>
    <property type="match status" value="1"/>
</dbReference>
<dbReference type="SUPFAM" id="SSF53098">
    <property type="entry name" value="Ribonuclease H-like"/>
    <property type="match status" value="1"/>
</dbReference>
<proteinExistence type="inferred from homology"/>
<keyword id="KW-0269">Exonuclease</keyword>
<keyword id="KW-0378">Hydrolase</keyword>
<keyword id="KW-0460">Magnesium</keyword>
<keyword id="KW-0479">Metal-binding</keyword>
<keyword id="KW-0540">Nuclease</keyword>
<keyword id="KW-0539">Nucleus</keyword>
<keyword id="KW-0597">Phosphoprotein</keyword>
<keyword id="KW-1185">Reference proteome</keyword>
<comment type="function">
    <text evidence="2">Has exonuclease activity on both single-stranded and duplex templates bearing overhangs, but not blunt ended duplex DNA, and cleaves in a 3'-5' direction. Essential for the formation of DNA replication focal centers. Has an important role in maintaining genome stability.</text>
</comment>
<comment type="subcellular location">
    <subcellularLocation>
        <location evidence="2">Nucleus</location>
    </subcellularLocation>
</comment>
<comment type="similarity">
    <text evidence="5">Belongs to the WRNexo family.</text>
</comment>
<comment type="sequence caution" evidence="5">
    <conflict type="erroneous initiation">
        <sequence resource="EMBL-CDS" id="EDV42684"/>
    </conflict>
    <text>Truncated N-terminus.</text>
</comment>
<gene>
    <name evidence="2" type="primary">WRNexo</name>
    <name type="ORF">GF18118</name>
</gene>